<keyword id="KW-0489">Methyltransferase</keyword>
<keyword id="KW-1185">Reference proteome</keyword>
<keyword id="KW-0949">S-adenosyl-L-methionine</keyword>
<keyword id="KW-0808">Transferase</keyword>
<keyword id="KW-0819">tRNA processing</keyword>
<sequence>MRLRNNKNAKLELESCENVIKNFPFKVEKNSTLEIGMGKGQMLIELAQKNPQKIFVGIEKYPTVALIAAKKAKKLELNNFFIIVDDVENALDFFEGTFDLIWLTFSDPWPKKRHYKRRLTYEKFLKIYSKILSENGLIKLKTDNDDFFQWTLESLEKNGLNIINKTSDLEKSEFAKDNVKTSYEQKFVSLGKNINFVEFSFKK</sequence>
<accession>Q98R44</accession>
<organism>
    <name type="scientific">Mycoplasmopsis pulmonis (strain UAB CTIP)</name>
    <name type="common">Mycoplasma pulmonis</name>
    <dbReference type="NCBI Taxonomy" id="272635"/>
    <lineage>
        <taxon>Bacteria</taxon>
        <taxon>Bacillati</taxon>
        <taxon>Mycoplasmatota</taxon>
        <taxon>Mycoplasmoidales</taxon>
        <taxon>Metamycoplasmataceae</taxon>
        <taxon>Mycoplasmopsis</taxon>
    </lineage>
</organism>
<reference key="1">
    <citation type="journal article" date="2001" name="Nucleic Acids Res.">
        <title>The complete genome sequence of the murine respiratory pathogen Mycoplasma pulmonis.</title>
        <authorList>
            <person name="Chambaud I."/>
            <person name="Heilig R."/>
            <person name="Ferris S."/>
            <person name="Barbe V."/>
            <person name="Samson D."/>
            <person name="Galisson F."/>
            <person name="Moszer I."/>
            <person name="Dybvig K."/>
            <person name="Wroblewski H."/>
            <person name="Viari A."/>
            <person name="Rocha E.P.C."/>
            <person name="Blanchard A."/>
        </authorList>
    </citation>
    <scope>NUCLEOTIDE SEQUENCE [LARGE SCALE GENOMIC DNA]</scope>
    <source>
        <strain>UAB CTIP</strain>
    </source>
</reference>
<protein>
    <recommendedName>
        <fullName evidence="2">tRNA (guanine-N(7)-)-methyltransferase</fullName>
        <ecNumber evidence="2">2.1.1.33</ecNumber>
    </recommendedName>
    <alternativeName>
        <fullName evidence="2">tRNA (guanine(46)-N(7))-methyltransferase</fullName>
    </alternativeName>
    <alternativeName>
        <fullName evidence="2">tRNA(m7G46)-methyltransferase</fullName>
    </alternativeName>
</protein>
<dbReference type="EC" id="2.1.1.33" evidence="2"/>
<dbReference type="EMBL" id="AL445563">
    <property type="protein sequence ID" value="CAC13339.1"/>
    <property type="molecule type" value="Genomic_DNA"/>
</dbReference>
<dbReference type="PIR" id="F90532">
    <property type="entry name" value="F90532"/>
</dbReference>
<dbReference type="RefSeq" id="WP_010924970.1">
    <property type="nucleotide sequence ID" value="NC_002771.1"/>
</dbReference>
<dbReference type="SMR" id="Q98R44"/>
<dbReference type="STRING" id="272635.gene:17576751"/>
<dbReference type="KEGG" id="mpu:MYPU_1660"/>
<dbReference type="eggNOG" id="COG0220">
    <property type="taxonomic scope" value="Bacteria"/>
</dbReference>
<dbReference type="HOGENOM" id="CLU_050910_2_1_14"/>
<dbReference type="BioCyc" id="MPUL272635:G1GT6-167-MONOMER"/>
<dbReference type="UniPathway" id="UPA00989"/>
<dbReference type="Proteomes" id="UP000000528">
    <property type="component" value="Chromosome"/>
</dbReference>
<dbReference type="GO" id="GO:0043527">
    <property type="term" value="C:tRNA methyltransferase complex"/>
    <property type="evidence" value="ECO:0007669"/>
    <property type="project" value="TreeGrafter"/>
</dbReference>
<dbReference type="GO" id="GO:0008176">
    <property type="term" value="F:tRNA (guanine(46)-N7)-methyltransferase activity"/>
    <property type="evidence" value="ECO:0007669"/>
    <property type="project" value="UniProtKB-UniRule"/>
</dbReference>
<dbReference type="CDD" id="cd02440">
    <property type="entry name" value="AdoMet_MTases"/>
    <property type="match status" value="1"/>
</dbReference>
<dbReference type="Gene3D" id="3.40.50.150">
    <property type="entry name" value="Vaccinia Virus protein VP39"/>
    <property type="match status" value="1"/>
</dbReference>
<dbReference type="HAMAP" id="MF_01057">
    <property type="entry name" value="tRNA_methyltr_TrmB"/>
    <property type="match status" value="1"/>
</dbReference>
<dbReference type="InterPro" id="IPR029063">
    <property type="entry name" value="SAM-dependent_MTases_sf"/>
</dbReference>
<dbReference type="InterPro" id="IPR003358">
    <property type="entry name" value="tRNA_(Gua-N-7)_MeTrfase_Trmb"/>
</dbReference>
<dbReference type="InterPro" id="IPR055361">
    <property type="entry name" value="tRNA_methyltr_TrmB_bact"/>
</dbReference>
<dbReference type="NCBIfam" id="NF001080">
    <property type="entry name" value="PRK00121.2-2"/>
    <property type="match status" value="1"/>
</dbReference>
<dbReference type="NCBIfam" id="TIGR00091">
    <property type="entry name" value="tRNA (guanosine(46)-N7)-methyltransferase TrmB"/>
    <property type="match status" value="1"/>
</dbReference>
<dbReference type="PANTHER" id="PTHR23417">
    <property type="entry name" value="3-DEOXY-D-MANNO-OCTULOSONIC-ACID TRANSFERASE/TRNA GUANINE-N 7 - -METHYLTRANSFERASE"/>
    <property type="match status" value="1"/>
</dbReference>
<dbReference type="PANTHER" id="PTHR23417:SF14">
    <property type="entry name" value="PENTACOTRIPEPTIDE-REPEAT REGION OF PRORP DOMAIN-CONTAINING PROTEIN"/>
    <property type="match status" value="1"/>
</dbReference>
<dbReference type="Pfam" id="PF02390">
    <property type="entry name" value="Methyltransf_4"/>
    <property type="match status" value="1"/>
</dbReference>
<dbReference type="SUPFAM" id="SSF53335">
    <property type="entry name" value="S-adenosyl-L-methionine-dependent methyltransferases"/>
    <property type="match status" value="1"/>
</dbReference>
<dbReference type="PROSITE" id="PS51625">
    <property type="entry name" value="SAM_MT_TRMB"/>
    <property type="match status" value="1"/>
</dbReference>
<comment type="function">
    <text evidence="2">Catalyzes the formation of N(7)-methylguanine at position 46 (m7G46) in tRNA.</text>
</comment>
<comment type="catalytic activity">
    <reaction evidence="2">
        <text>guanosine(46) in tRNA + S-adenosyl-L-methionine = N(7)-methylguanosine(46) in tRNA + S-adenosyl-L-homocysteine</text>
        <dbReference type="Rhea" id="RHEA:42708"/>
        <dbReference type="Rhea" id="RHEA-COMP:10188"/>
        <dbReference type="Rhea" id="RHEA-COMP:10189"/>
        <dbReference type="ChEBI" id="CHEBI:57856"/>
        <dbReference type="ChEBI" id="CHEBI:59789"/>
        <dbReference type="ChEBI" id="CHEBI:74269"/>
        <dbReference type="ChEBI" id="CHEBI:74480"/>
        <dbReference type="EC" id="2.1.1.33"/>
    </reaction>
</comment>
<comment type="pathway">
    <text evidence="2">tRNA modification; N(7)-methylguanine-tRNA biosynthesis.</text>
</comment>
<comment type="similarity">
    <text evidence="2">Belongs to the class I-like SAM-binding methyltransferase superfamily. TrmB family.</text>
</comment>
<proteinExistence type="inferred from homology"/>
<evidence type="ECO:0000250" key="1"/>
<evidence type="ECO:0000255" key="2">
    <source>
        <dbReference type="HAMAP-Rule" id="MF_01057"/>
    </source>
</evidence>
<name>TRMB_MYCPU</name>
<feature type="chain" id="PRO_0000171360" description="tRNA (guanine-N(7)-)-methyltransferase">
    <location>
        <begin position="1"/>
        <end position="203"/>
    </location>
</feature>
<feature type="active site" evidence="1">
    <location>
        <position position="107"/>
    </location>
</feature>
<feature type="binding site" evidence="2">
    <location>
        <position position="34"/>
    </location>
    <ligand>
        <name>S-adenosyl-L-methionine</name>
        <dbReference type="ChEBI" id="CHEBI:59789"/>
    </ligand>
</feature>
<feature type="binding site" evidence="2">
    <location>
        <position position="59"/>
    </location>
    <ligand>
        <name>S-adenosyl-L-methionine</name>
        <dbReference type="ChEBI" id="CHEBI:59789"/>
    </ligand>
</feature>
<feature type="binding site" evidence="2">
    <location>
        <position position="86"/>
    </location>
    <ligand>
        <name>S-adenosyl-L-methionine</name>
        <dbReference type="ChEBI" id="CHEBI:59789"/>
    </ligand>
</feature>
<feature type="binding site" evidence="2">
    <location>
        <position position="107"/>
    </location>
    <ligand>
        <name>S-adenosyl-L-methionine</name>
        <dbReference type="ChEBI" id="CHEBI:59789"/>
    </ligand>
</feature>
<feature type="binding site" evidence="2">
    <location>
        <position position="111"/>
    </location>
    <ligand>
        <name>substrate</name>
    </ligand>
</feature>
<feature type="binding site" evidence="2">
    <location>
        <position position="143"/>
    </location>
    <ligand>
        <name>substrate</name>
    </ligand>
</feature>
<feature type="binding site" evidence="2">
    <location>
        <begin position="181"/>
        <end position="184"/>
    </location>
    <ligand>
        <name>substrate</name>
    </ligand>
</feature>
<gene>
    <name evidence="2" type="primary">trmB</name>
    <name type="ordered locus">MYPU_1660</name>
</gene>